<evidence type="ECO:0000255" key="1"/>
<evidence type="ECO:0000305" key="2"/>
<organism>
    <name type="scientific">Brucella abortus biovar 1 (strain 9-941)</name>
    <dbReference type="NCBI Taxonomy" id="262698"/>
    <lineage>
        <taxon>Bacteria</taxon>
        <taxon>Pseudomonadati</taxon>
        <taxon>Pseudomonadota</taxon>
        <taxon>Alphaproteobacteria</taxon>
        <taxon>Hyphomicrobiales</taxon>
        <taxon>Brucellaceae</taxon>
        <taxon>Brucella/Ochrobactrum group</taxon>
        <taxon>Brucella</taxon>
    </lineage>
</organism>
<dbReference type="EMBL" id="X79284">
    <property type="protein sequence ID" value="CAA55872.1"/>
    <property type="molecule type" value="Genomic_DNA"/>
</dbReference>
<dbReference type="EMBL" id="AE017223">
    <property type="protein sequence ID" value="AAX74095.1"/>
    <property type="molecule type" value="Genomic_DNA"/>
</dbReference>
<dbReference type="PIR" id="A56152">
    <property type="entry name" value="A56152"/>
</dbReference>
<dbReference type="RefSeq" id="WP_002963844.1">
    <property type="nucleotide sequence ID" value="NC_006932.1"/>
</dbReference>
<dbReference type="SMR" id="Q44664"/>
<dbReference type="TCDB" id="1.B.4.2.20">
    <property type="family name" value="the brucella-rhizobium porin (brp) family"/>
</dbReference>
<dbReference type="EnsemblBacteria" id="AAX74095">
    <property type="protein sequence ID" value="AAX74095"/>
    <property type="gene ID" value="BruAb1_0720"/>
</dbReference>
<dbReference type="GeneID" id="97533976"/>
<dbReference type="KEGG" id="bmb:BruAb1_0720"/>
<dbReference type="HOGENOM" id="CLU_037100_4_0_5"/>
<dbReference type="Proteomes" id="UP000000540">
    <property type="component" value="Chromosome I"/>
</dbReference>
<dbReference type="GO" id="GO:0009279">
    <property type="term" value="C:cell outer membrane"/>
    <property type="evidence" value="ECO:0007669"/>
    <property type="project" value="UniProtKB-SubCell"/>
</dbReference>
<dbReference type="Gene3D" id="2.40.160.20">
    <property type="match status" value="1"/>
</dbReference>
<dbReference type="InterPro" id="IPR051692">
    <property type="entry name" value="OMP-like"/>
</dbReference>
<dbReference type="InterPro" id="IPR011250">
    <property type="entry name" value="OMP/PagP_b-brl"/>
</dbReference>
<dbReference type="InterPro" id="IPR027385">
    <property type="entry name" value="OMP_b-brl"/>
</dbReference>
<dbReference type="PANTHER" id="PTHR34001">
    <property type="entry name" value="BLL7405 PROTEIN"/>
    <property type="match status" value="1"/>
</dbReference>
<dbReference type="PANTHER" id="PTHR34001:SF3">
    <property type="entry name" value="BLL7405 PROTEIN"/>
    <property type="match status" value="1"/>
</dbReference>
<dbReference type="Pfam" id="PF13505">
    <property type="entry name" value="OMP_b-brl"/>
    <property type="match status" value="1"/>
</dbReference>
<dbReference type="SUPFAM" id="SSF56925">
    <property type="entry name" value="OMPA-like"/>
    <property type="match status" value="1"/>
</dbReference>
<gene>
    <name type="primary">omp25</name>
    <name type="ordered locus">BruAb1_0720</name>
</gene>
<keyword id="KW-0998">Cell outer membrane</keyword>
<keyword id="KW-0472">Membrane</keyword>
<keyword id="KW-0732">Signal</keyword>
<keyword id="KW-0812">Transmembrane</keyword>
<keyword id="KW-1134">Transmembrane beta strand</keyword>
<protein>
    <recommendedName>
        <fullName>25 kDa outer-membrane immunogenic protein</fullName>
    </recommendedName>
</protein>
<reference key="1">
    <citation type="journal article" date="1995" name="J. Bacteriol.">
        <title>Cloning and nucleotide sequence of the gene coding for the major 25-kilodalton outer membrane protein of Brucella abortus.</title>
        <authorList>
            <person name="de Wergifosse P."/>
            <person name="Lintermans P."/>
            <person name="Limet J.N."/>
            <person name="Cloeckaert A."/>
        </authorList>
    </citation>
    <scope>NUCLEOTIDE SEQUENCE [GENOMIC DNA]</scope>
    <source>
        <strain>544S</strain>
    </source>
</reference>
<reference key="2">
    <citation type="journal article" date="2005" name="J. Bacteriol.">
        <title>Completion of the genome sequence of Brucella abortus and comparison to the highly similar genomes of Brucella melitensis and Brucella suis.</title>
        <authorList>
            <person name="Halling S.M."/>
            <person name="Peterson-Burch B.D."/>
            <person name="Bricker B.J."/>
            <person name="Zuerner R.L."/>
            <person name="Qing Z."/>
            <person name="Li L.-L."/>
            <person name="Kapur V."/>
            <person name="Alt D.P."/>
            <person name="Olsen S.C."/>
        </authorList>
    </citation>
    <scope>NUCLEOTIDE SEQUENCE [LARGE SCALE GENOMIC DNA]</scope>
    <source>
        <strain>9-941</strain>
    </source>
</reference>
<feature type="signal peptide" evidence="1">
    <location>
        <begin position="1"/>
        <end position="23"/>
    </location>
</feature>
<feature type="chain" id="PRO_0000021878" description="25 kDa outer-membrane immunogenic protein">
    <location>
        <begin position="24"/>
        <end position="213"/>
    </location>
</feature>
<feature type="sequence conflict" description="In Ref. 1; CAA55872." evidence="2" ref="1">
    <original>R</original>
    <variation>G</variation>
    <location>
        <position position="120"/>
    </location>
</feature>
<proteinExistence type="inferred from homology"/>
<accession>Q44664</accession>
<accession>Q57E39</accession>
<comment type="subcellular location">
    <subcellularLocation>
        <location>Cell outer membrane</location>
    </subcellularLocation>
</comment>
<comment type="similarity">
    <text evidence="2">Belongs to the Omp25/RopB family.</text>
</comment>
<sequence>MRTLKSLVIVSAALLPFSATAFAADAIQEQPPVPAPVEVAPQYSWAGGYTGLYLGYGWNKAKTSTVGSIKPDDWKAGAFAGWNFQQDQIVYGVEGDAGYSWAKKSKDGLEVKQGFEGSLRARVGYDLNPVMPYLTAGIAGSQIKLNNGLDDESKFRVGWTAGAGLEAKLTDNILGRVEYRYTQYGNKNYDLAGTTVRNKLDTQDIRVGIGYKF</sequence>
<name>OM25_BRUAB</name>